<accession>Q8K9N3</accession>
<evidence type="ECO:0000250" key="1">
    <source>
        <dbReference type="UniProtKB" id="P0AFG3"/>
    </source>
</evidence>
<evidence type="ECO:0000305" key="2"/>
<sequence length="923" mass="107422">MKKNTLEKWFNSSWLSGNNQNYIEKIYESYLINPKSVDITWQDKFSDLSKKRKNILKEEKFVYKNNSFKEIKIDKQEILEKKINYIINTFRKKGYKKSLIDPLKLNEQKKYKYLEPTFYHFSEDELKKTVKIDFKNSSQYEIKIRDLYEQLNNKYCGSIGFEYMYIENSFEKKWITKHIELFFKENLFIKKEKIRFLKEILYGETFEKYLGKKFSGTKRFSLEGGETLISILHEIIRYSKKNDVSEIILGMAHRGRLNVLVNVLNKNPQVLFNEFSGINIPKEYSGDVKYHMGGITKIKNDKKKIYLKLAYNPSHLEIVNPVVLGIARASINQLKISENKFLSINIHGDASIIGQGVIQETLNMSQTEAYKIGGTIHIVINNQIGFTTSNPKNLRSSKYCTDVAKMIQAPVFHVNADDIEASIFAIQLALKFKKKFKKDVFIDLVCYRRHGHNEVDDPFVTQPIMYKKIHNHPTIGQIYSNLLISEKLITSNDIEKIIEKYTTKLVQGKNVLSQERNITFQNGNKNFFIKKQKENTQLNFLNIKDLLYSINTIPNSIEVHNRVKKIYQERIGMADGQILLDWGTAELLAYATILKEGISCRLSGEDISRGTFFHRHAFIHDQNNGSIYVPLQNIEKNQGKFEIWDSVLSEEAVLAFEYGYSLFPSNNLTIWEAQFGDFANGAQVVIDQFISSSEQKWNQKSNLVLFLPHGYEGQGPEHSSARLERFLQLCAENNIQVCIPTVSSQIFHLLRRQIFSNVYKPLIVLTPKSLLRNNVARSSLEVLVNENFKNVINEIDKNQKEVKRIIFCSGKIYYDLLEYRNKCDINNVLLIRIEQLYPFPKDEILTILKSYSYVQDFIWCQEEPHNQGAWFYIKDLLSTLLPLNSHLNYVSRPSAASPAAGHILIHRKEQEKLINNAFNFKIA</sequence>
<protein>
    <recommendedName>
        <fullName>2-oxoglutarate dehydrogenase E1 component</fullName>
        <ecNumber evidence="1">1.2.4.2</ecNumber>
    </recommendedName>
    <alternativeName>
        <fullName>Alpha-ketoglutarate dehydrogenase</fullName>
    </alternativeName>
</protein>
<reference key="1">
    <citation type="journal article" date="2002" name="Science">
        <title>50 million years of genomic stasis in endosymbiotic bacteria.</title>
        <authorList>
            <person name="Tamas I."/>
            <person name="Klasson L."/>
            <person name="Canbaeck B."/>
            <person name="Naeslund A.K."/>
            <person name="Eriksson A.-S."/>
            <person name="Wernegreen J.J."/>
            <person name="Sandstroem J.P."/>
            <person name="Moran N.A."/>
            <person name="Andersson S.G.E."/>
        </authorList>
    </citation>
    <scope>NUCLEOTIDE SEQUENCE [LARGE SCALE GENOMIC DNA]</scope>
    <source>
        <strain>Sg</strain>
    </source>
</reference>
<feature type="chain" id="PRO_0000162188" description="2-oxoglutarate dehydrogenase E1 component">
    <location>
        <begin position="1"/>
        <end position="923"/>
    </location>
</feature>
<gene>
    <name type="primary">sucA</name>
    <name type="ordered locus">BUsg_292</name>
</gene>
<organism>
    <name type="scientific">Buchnera aphidicola subsp. Schizaphis graminum (strain Sg)</name>
    <dbReference type="NCBI Taxonomy" id="198804"/>
    <lineage>
        <taxon>Bacteria</taxon>
        <taxon>Pseudomonadati</taxon>
        <taxon>Pseudomonadota</taxon>
        <taxon>Gammaproteobacteria</taxon>
        <taxon>Enterobacterales</taxon>
        <taxon>Erwiniaceae</taxon>
        <taxon>Buchnera</taxon>
    </lineage>
</organism>
<name>ODO1_BUCAP</name>
<dbReference type="EC" id="1.2.4.2" evidence="1"/>
<dbReference type="EMBL" id="AE013218">
    <property type="protein sequence ID" value="AAM67847.1"/>
    <property type="molecule type" value="Genomic_DNA"/>
</dbReference>
<dbReference type="RefSeq" id="WP_011053814.1">
    <property type="nucleotide sequence ID" value="NC_004061.1"/>
</dbReference>
<dbReference type="SMR" id="Q8K9N3"/>
<dbReference type="STRING" id="198804.BUsg_292"/>
<dbReference type="GeneID" id="93003762"/>
<dbReference type="KEGG" id="bas:BUsg_292"/>
<dbReference type="eggNOG" id="COG0567">
    <property type="taxonomic scope" value="Bacteria"/>
</dbReference>
<dbReference type="HOGENOM" id="CLU_004709_1_0_6"/>
<dbReference type="Proteomes" id="UP000000416">
    <property type="component" value="Chromosome"/>
</dbReference>
<dbReference type="GO" id="GO:0005829">
    <property type="term" value="C:cytosol"/>
    <property type="evidence" value="ECO:0007669"/>
    <property type="project" value="TreeGrafter"/>
</dbReference>
<dbReference type="GO" id="GO:0045252">
    <property type="term" value="C:oxoglutarate dehydrogenase complex"/>
    <property type="evidence" value="ECO:0007669"/>
    <property type="project" value="TreeGrafter"/>
</dbReference>
<dbReference type="GO" id="GO:0004591">
    <property type="term" value="F:oxoglutarate dehydrogenase (succinyl-transferring) activity"/>
    <property type="evidence" value="ECO:0007669"/>
    <property type="project" value="UniProtKB-EC"/>
</dbReference>
<dbReference type="GO" id="GO:0030976">
    <property type="term" value="F:thiamine pyrophosphate binding"/>
    <property type="evidence" value="ECO:0007669"/>
    <property type="project" value="InterPro"/>
</dbReference>
<dbReference type="GO" id="GO:0006096">
    <property type="term" value="P:glycolytic process"/>
    <property type="evidence" value="ECO:0007669"/>
    <property type="project" value="UniProtKB-KW"/>
</dbReference>
<dbReference type="GO" id="GO:0006099">
    <property type="term" value="P:tricarboxylic acid cycle"/>
    <property type="evidence" value="ECO:0007669"/>
    <property type="project" value="TreeGrafter"/>
</dbReference>
<dbReference type="CDD" id="cd02016">
    <property type="entry name" value="TPP_E1_OGDC_like"/>
    <property type="match status" value="1"/>
</dbReference>
<dbReference type="Gene3D" id="3.40.50.12470">
    <property type="match status" value="1"/>
</dbReference>
<dbReference type="Gene3D" id="3.40.50.970">
    <property type="match status" value="1"/>
</dbReference>
<dbReference type="Gene3D" id="3.40.50.11610">
    <property type="entry name" value="Multifunctional 2-oxoglutarate metabolism enzyme, C-terminal domain"/>
    <property type="match status" value="1"/>
</dbReference>
<dbReference type="Gene3D" id="1.10.287.1150">
    <property type="entry name" value="TPP helical domain"/>
    <property type="match status" value="1"/>
</dbReference>
<dbReference type="InterPro" id="IPR032106">
    <property type="entry name" value="2-oxogl_dehyd_N"/>
</dbReference>
<dbReference type="InterPro" id="IPR011603">
    <property type="entry name" value="2oxoglutarate_DH_E1"/>
</dbReference>
<dbReference type="InterPro" id="IPR001017">
    <property type="entry name" value="DH_E1"/>
</dbReference>
<dbReference type="InterPro" id="IPR042179">
    <property type="entry name" value="KGD_C_sf"/>
</dbReference>
<dbReference type="InterPro" id="IPR031717">
    <property type="entry name" value="ODO-1/KGD_C"/>
</dbReference>
<dbReference type="InterPro" id="IPR029061">
    <property type="entry name" value="THDP-binding"/>
</dbReference>
<dbReference type="InterPro" id="IPR005475">
    <property type="entry name" value="Transketolase-like_Pyr-bd"/>
</dbReference>
<dbReference type="NCBIfam" id="TIGR00239">
    <property type="entry name" value="2oxo_dh_E1"/>
    <property type="match status" value="1"/>
</dbReference>
<dbReference type="NCBIfam" id="NF006914">
    <property type="entry name" value="PRK09404.1"/>
    <property type="match status" value="1"/>
</dbReference>
<dbReference type="NCBIfam" id="NF008907">
    <property type="entry name" value="PRK12270.1"/>
    <property type="match status" value="1"/>
</dbReference>
<dbReference type="PANTHER" id="PTHR23152:SF4">
    <property type="entry name" value="2-OXOADIPATE DEHYDROGENASE COMPLEX COMPONENT E1"/>
    <property type="match status" value="1"/>
</dbReference>
<dbReference type="PANTHER" id="PTHR23152">
    <property type="entry name" value="2-OXOGLUTARATE DEHYDROGENASE"/>
    <property type="match status" value="1"/>
</dbReference>
<dbReference type="Pfam" id="PF16078">
    <property type="entry name" value="2-oxogl_dehyd_N"/>
    <property type="match status" value="1"/>
</dbReference>
<dbReference type="Pfam" id="PF00676">
    <property type="entry name" value="E1_dh"/>
    <property type="match status" value="1"/>
</dbReference>
<dbReference type="Pfam" id="PF16870">
    <property type="entry name" value="OxoGdeHyase_C"/>
    <property type="match status" value="1"/>
</dbReference>
<dbReference type="Pfam" id="PF02779">
    <property type="entry name" value="Transket_pyr"/>
    <property type="match status" value="1"/>
</dbReference>
<dbReference type="PIRSF" id="PIRSF000157">
    <property type="entry name" value="Oxoglu_dh_E1"/>
    <property type="match status" value="1"/>
</dbReference>
<dbReference type="SMART" id="SM00861">
    <property type="entry name" value="Transket_pyr"/>
    <property type="match status" value="1"/>
</dbReference>
<dbReference type="SUPFAM" id="SSF52518">
    <property type="entry name" value="Thiamin diphosphate-binding fold (THDP-binding)"/>
    <property type="match status" value="2"/>
</dbReference>
<comment type="function">
    <text evidence="1">E1 component of the 2-oxoglutarate dehydrogenase (OGDH) complex which catalyzes the decarboxylation of 2-oxoglutarate, the first step in the conversion of 2-oxoglutarate to succinyl-CoA and CO(2).</text>
</comment>
<comment type="catalytic activity">
    <reaction evidence="1">
        <text>N(6)-[(R)-lipoyl]-L-lysyl-[protein] + 2-oxoglutarate + H(+) = N(6)-[(R)-S(8)-succinyldihydrolipoyl]-L-lysyl-[protein] + CO2</text>
        <dbReference type="Rhea" id="RHEA:12188"/>
        <dbReference type="Rhea" id="RHEA-COMP:10474"/>
        <dbReference type="Rhea" id="RHEA-COMP:20092"/>
        <dbReference type="ChEBI" id="CHEBI:15378"/>
        <dbReference type="ChEBI" id="CHEBI:16526"/>
        <dbReference type="ChEBI" id="CHEBI:16810"/>
        <dbReference type="ChEBI" id="CHEBI:83099"/>
        <dbReference type="ChEBI" id="CHEBI:83120"/>
        <dbReference type="EC" id="1.2.4.2"/>
    </reaction>
</comment>
<comment type="cofactor">
    <cofactor evidence="1">
        <name>thiamine diphosphate</name>
        <dbReference type="ChEBI" id="CHEBI:58937"/>
    </cofactor>
</comment>
<comment type="subunit">
    <text evidence="1">Homodimer. Part of the 2-oxoglutarate dehydrogenase (OGDH) complex composed of E1 (2-oxoglutarate dehydrogenase), E2 (dihydrolipoamide succinyltransferase) and E3 (dihydrolipoamide dehydrogenase); the complex contains multiple copies of the three enzymatic components (E1, E2 and E3).</text>
</comment>
<comment type="similarity">
    <text evidence="2">Belongs to the alpha-ketoglutarate dehydrogenase family.</text>
</comment>
<keyword id="KW-0324">Glycolysis</keyword>
<keyword id="KW-0560">Oxidoreductase</keyword>
<keyword id="KW-0786">Thiamine pyrophosphate</keyword>
<proteinExistence type="inferred from homology"/>